<accession>Q2GBD2</accession>
<sequence length="451" mass="48807">MTLRMLFAFALLAAAPAQAQQTEPQPAEEGGLSGTVSDDSEWQDLGIAIPAFATNADVPTPTSAGSTSALGQALAQVISANLRNNGLFKPVGPESLPRPGFEQVQAPDFAVWSARSAEMLVQGYVRANGDGQLTVGCYLYDVALKQQLEKAGWTVAPADWRRAAHKCADMIYARLSGESPFFDSRVAYIAESGPKDRRMKRLAIMDSDGANHRYLTSGQATALTPRFSPDYKSILYLSYLNGRPRIYVYDLAANTQRLVTETPGPTFAPRWSPDGKWILYSMATAGNTDIYKVPASGGASQRLTDTPGIDVGGSFSPDGSRIVFESDRSGSQQIYVMNADGSDHRRISFFGGRAATPEWSPRGDQIAFTHIVGNLRIAVVSPGGGDLRYLTDSWQDEAPTWSPNGRIIQFFRTEKGSGKASVWQVDLTGRNERRLSTPGDASDPAWGPLLP</sequence>
<name>TOLB1_NOVAD</name>
<feature type="signal peptide" evidence="1">
    <location>
        <begin position="1"/>
        <end position="19"/>
    </location>
</feature>
<feature type="chain" id="PRO_0000259063" description="Tol-Pal system protein TolB 1" evidence="1">
    <location>
        <begin position="20"/>
        <end position="451"/>
    </location>
</feature>
<feature type="region of interest" description="Disordered" evidence="2">
    <location>
        <begin position="18"/>
        <end position="37"/>
    </location>
</feature>
<feature type="region of interest" description="Disordered" evidence="2">
    <location>
        <begin position="431"/>
        <end position="451"/>
    </location>
</feature>
<feature type="compositionally biased region" description="Low complexity" evidence="2">
    <location>
        <begin position="18"/>
        <end position="29"/>
    </location>
</feature>
<protein>
    <recommendedName>
        <fullName evidence="1">Tol-Pal system protein TolB 1</fullName>
    </recommendedName>
</protein>
<keyword id="KW-0131">Cell cycle</keyword>
<keyword id="KW-0132">Cell division</keyword>
<keyword id="KW-0574">Periplasm</keyword>
<keyword id="KW-1185">Reference proteome</keyword>
<keyword id="KW-0732">Signal</keyword>
<organism>
    <name type="scientific">Novosphingobium aromaticivorans (strain ATCC 700278 / DSM 12444 / CCUG 56034 / CIP 105152 / NBRC 16084 / F199)</name>
    <dbReference type="NCBI Taxonomy" id="279238"/>
    <lineage>
        <taxon>Bacteria</taxon>
        <taxon>Pseudomonadati</taxon>
        <taxon>Pseudomonadota</taxon>
        <taxon>Alphaproteobacteria</taxon>
        <taxon>Sphingomonadales</taxon>
        <taxon>Sphingomonadaceae</taxon>
        <taxon>Novosphingobium</taxon>
    </lineage>
</organism>
<proteinExistence type="inferred from homology"/>
<comment type="function">
    <text evidence="1">Part of the Tol-Pal system, which plays a role in outer membrane invagination during cell division and is important for maintaining outer membrane integrity.</text>
</comment>
<comment type="subunit">
    <text evidence="1">The Tol-Pal system is composed of five core proteins: the inner membrane proteins TolA, TolQ and TolR, the periplasmic protein TolB and the outer membrane protein Pal. They form a network linking the inner and outer membranes and the peptidoglycan layer.</text>
</comment>
<comment type="subcellular location">
    <subcellularLocation>
        <location evidence="1">Periplasm</location>
    </subcellularLocation>
</comment>
<comment type="similarity">
    <text evidence="1">Belongs to the TolB family.</text>
</comment>
<gene>
    <name evidence="1" type="primary">tolB1</name>
    <name type="ordered locus">Saro_0393</name>
</gene>
<dbReference type="EMBL" id="CP000248">
    <property type="protein sequence ID" value="ABD24841.1"/>
    <property type="molecule type" value="Genomic_DNA"/>
</dbReference>
<dbReference type="RefSeq" id="WP_011444055.1">
    <property type="nucleotide sequence ID" value="NC_007794.1"/>
</dbReference>
<dbReference type="SMR" id="Q2GBD2"/>
<dbReference type="STRING" id="279238.Saro_0393"/>
<dbReference type="DNASU" id="3918277"/>
<dbReference type="KEGG" id="nar:Saro_0393"/>
<dbReference type="eggNOG" id="COG0823">
    <property type="taxonomic scope" value="Bacteria"/>
</dbReference>
<dbReference type="HOGENOM" id="CLU_047123_0_0_5"/>
<dbReference type="Proteomes" id="UP000009134">
    <property type="component" value="Chromosome"/>
</dbReference>
<dbReference type="GO" id="GO:0042597">
    <property type="term" value="C:periplasmic space"/>
    <property type="evidence" value="ECO:0007669"/>
    <property type="project" value="UniProtKB-SubCell"/>
</dbReference>
<dbReference type="GO" id="GO:0051301">
    <property type="term" value="P:cell division"/>
    <property type="evidence" value="ECO:0007669"/>
    <property type="project" value="UniProtKB-UniRule"/>
</dbReference>
<dbReference type="GO" id="GO:0017038">
    <property type="term" value="P:protein import"/>
    <property type="evidence" value="ECO:0007669"/>
    <property type="project" value="InterPro"/>
</dbReference>
<dbReference type="Gene3D" id="2.120.10.30">
    <property type="entry name" value="TolB, C-terminal domain"/>
    <property type="match status" value="1"/>
</dbReference>
<dbReference type="Gene3D" id="3.40.50.10070">
    <property type="entry name" value="TolB, N-terminal domain"/>
    <property type="match status" value="1"/>
</dbReference>
<dbReference type="HAMAP" id="MF_00671">
    <property type="entry name" value="TolB"/>
    <property type="match status" value="1"/>
</dbReference>
<dbReference type="InterPro" id="IPR011042">
    <property type="entry name" value="6-blade_b-propeller_TolB-like"/>
</dbReference>
<dbReference type="InterPro" id="IPR011659">
    <property type="entry name" value="PD40"/>
</dbReference>
<dbReference type="InterPro" id="IPR014167">
    <property type="entry name" value="Tol-Pal_TolB"/>
</dbReference>
<dbReference type="InterPro" id="IPR007195">
    <property type="entry name" value="TolB_N"/>
</dbReference>
<dbReference type="NCBIfam" id="TIGR02800">
    <property type="entry name" value="propeller_TolB"/>
    <property type="match status" value="1"/>
</dbReference>
<dbReference type="PANTHER" id="PTHR36842:SF1">
    <property type="entry name" value="PROTEIN TOLB"/>
    <property type="match status" value="1"/>
</dbReference>
<dbReference type="PANTHER" id="PTHR36842">
    <property type="entry name" value="PROTEIN TOLB HOMOLOG"/>
    <property type="match status" value="1"/>
</dbReference>
<dbReference type="Pfam" id="PF07676">
    <property type="entry name" value="PD40"/>
    <property type="match status" value="4"/>
</dbReference>
<dbReference type="Pfam" id="PF04052">
    <property type="entry name" value="TolB_N"/>
    <property type="match status" value="1"/>
</dbReference>
<dbReference type="SUPFAM" id="SSF52964">
    <property type="entry name" value="TolB, N-terminal domain"/>
    <property type="match status" value="1"/>
</dbReference>
<dbReference type="SUPFAM" id="SSF69304">
    <property type="entry name" value="Tricorn protease N-terminal domain"/>
    <property type="match status" value="1"/>
</dbReference>
<evidence type="ECO:0000255" key="1">
    <source>
        <dbReference type="HAMAP-Rule" id="MF_00671"/>
    </source>
</evidence>
<evidence type="ECO:0000256" key="2">
    <source>
        <dbReference type="SAM" id="MobiDB-lite"/>
    </source>
</evidence>
<reference key="1">
    <citation type="submission" date="2006-01" db="EMBL/GenBank/DDBJ databases">
        <title>Complete sequence of Novosphingobium aromaticivorans DSM 12444.</title>
        <authorList>
            <consortium name="US DOE Joint Genome Institute"/>
            <person name="Copeland A."/>
            <person name="Lucas S."/>
            <person name="Lapidus A."/>
            <person name="Barry K."/>
            <person name="Detter J.C."/>
            <person name="Glavina T."/>
            <person name="Hammon N."/>
            <person name="Israni S."/>
            <person name="Pitluck S."/>
            <person name="Chain P."/>
            <person name="Malfatti S."/>
            <person name="Shin M."/>
            <person name="Vergez L."/>
            <person name="Schmutz J."/>
            <person name="Larimer F."/>
            <person name="Land M."/>
            <person name="Kyrpides N."/>
            <person name="Ivanova N."/>
            <person name="Fredrickson J."/>
            <person name="Balkwill D."/>
            <person name="Romine M.F."/>
            <person name="Richardson P."/>
        </authorList>
    </citation>
    <scope>NUCLEOTIDE SEQUENCE [LARGE SCALE GENOMIC DNA]</scope>
    <source>
        <strain>ATCC 700278 / DSM 12444 / CCUG 56034 / CIP 105152 / NBRC 16084 / F199</strain>
    </source>
</reference>